<name>PDE6B_BOVIN</name>
<gene>
    <name type="primary">PDE6B</name>
    <name type="synonym">PDEB</name>
</gene>
<accession>P23439</accession>
<comment type="function">
    <text evidence="2 3">Necessary for the formation of a functional phosphodiesterase holoenzyme (By similarity). Involved in retinal circadian rhythm photoentrainment via modulation of UVA and orange light-induced phase-shift of the retina clock (By similarity). May participate in processes of transmission and amplification of the visual signal (By similarity).</text>
</comment>
<comment type="function">
    <text evidence="2 3">Rod-specific cGMP phosphodiesterase that catalyzes the hydrolysis of 3',5'-cyclic GMP (By similarity). Necessary for the formation of a functional phosphodiesterase holoenzyme (By similarity). Involved in retinal circadian rhythm photoentrainment via modulation of UVA and orange light-induced phase-shift of the retina clock (By similarity). May participate in processes of transmission and amplification of the visual signal (By similarity).</text>
</comment>
<comment type="catalytic activity">
    <reaction evidence="3">
        <text>3',5'-cyclic GMP + H2O = GMP + H(+)</text>
        <dbReference type="Rhea" id="RHEA:16957"/>
        <dbReference type="ChEBI" id="CHEBI:15377"/>
        <dbReference type="ChEBI" id="CHEBI:15378"/>
        <dbReference type="ChEBI" id="CHEBI:57746"/>
        <dbReference type="ChEBI" id="CHEBI:58115"/>
        <dbReference type="EC" id="3.1.4.35"/>
    </reaction>
    <physiologicalReaction direction="left-to-right" evidence="3">
        <dbReference type="Rhea" id="RHEA:16958"/>
    </physiologicalReaction>
</comment>
<comment type="cofactor">
    <cofactor evidence="1">
        <name>a divalent metal cation</name>
        <dbReference type="ChEBI" id="CHEBI:60240"/>
    </cofactor>
    <text evidence="1">Binds 2 divalent metal cations per subunit. Site 1 may preferentially bind zinc ions, while site 2 has a preference for magnesium and/or manganese ions.</text>
</comment>
<comment type="subunit">
    <text>Oligomer composed of two catalytic chains (alpha and beta), an inhibitory chain (gamma) and the delta chain.</text>
</comment>
<comment type="subcellular location">
    <subcellularLocation>
        <location evidence="3">Membrane</location>
        <topology evidence="3">Lipid-anchor</topology>
    </subcellularLocation>
    <subcellularLocation>
        <location evidence="3">Cell projection</location>
        <location evidence="3">Cilium</location>
        <location evidence="3">Photoreceptor outer segment</location>
    </subcellularLocation>
</comment>
<comment type="similarity">
    <text evidence="5">Belongs to the cyclic nucleotide phosphodiesterase family.</text>
</comment>
<dbReference type="EC" id="3.1.4.35"/>
<dbReference type="EMBL" id="J05553">
    <property type="protein sequence ID" value="AAA30440.1"/>
    <property type="molecule type" value="mRNA"/>
</dbReference>
<dbReference type="EMBL" id="X57146">
    <property type="protein sequence ID" value="CAA40436.1"/>
    <property type="molecule type" value="mRNA"/>
</dbReference>
<dbReference type="PIR" id="A36617">
    <property type="entry name" value="A36617"/>
</dbReference>
<dbReference type="RefSeq" id="NP_776843.1">
    <property type="nucleotide sequence ID" value="NM_174418.1"/>
</dbReference>
<dbReference type="PDB" id="6MZB">
    <property type="method" value="EM"/>
    <property type="resolution" value="3.40 A"/>
    <property type="chains" value="B=1-853"/>
</dbReference>
<dbReference type="PDB" id="7JSN">
    <property type="method" value="EM"/>
    <property type="resolution" value="3.20 A"/>
    <property type="chains" value="B=1-853"/>
</dbReference>
<dbReference type="PDB" id="8UFI">
    <property type="method" value="EM"/>
    <property type="resolution" value="3.10 A"/>
    <property type="chains" value="B=1-853"/>
</dbReference>
<dbReference type="PDB" id="8UGB">
    <property type="method" value="EM"/>
    <property type="resolution" value="3.00 A"/>
    <property type="chains" value="B=1-853"/>
</dbReference>
<dbReference type="PDB" id="8UGS">
    <property type="method" value="EM"/>
    <property type="resolution" value="3.20 A"/>
    <property type="chains" value="B=1-853"/>
</dbReference>
<dbReference type="PDB" id="8ULG">
    <property type="method" value="EM"/>
    <property type="resolution" value="3.20 A"/>
    <property type="chains" value="B=1-853"/>
</dbReference>
<dbReference type="PDBsum" id="6MZB"/>
<dbReference type="PDBsum" id="7JSN"/>
<dbReference type="PDBsum" id="8UFI"/>
<dbReference type="PDBsum" id="8UGB"/>
<dbReference type="PDBsum" id="8UGS"/>
<dbReference type="PDBsum" id="8ULG"/>
<dbReference type="EMDB" id="EMD-22458"/>
<dbReference type="EMDB" id="EMD-42208"/>
<dbReference type="EMDB" id="EMD-42220"/>
<dbReference type="EMDB" id="EMD-42234"/>
<dbReference type="EMDB" id="EMD-42358"/>
<dbReference type="EMDB" id="EMD-9297"/>
<dbReference type="SMR" id="P23439"/>
<dbReference type="CORUM" id="P23439"/>
<dbReference type="FunCoup" id="P23439">
    <property type="interactions" value="62"/>
</dbReference>
<dbReference type="IntAct" id="P23439">
    <property type="interactions" value="2"/>
</dbReference>
<dbReference type="MINT" id="P23439"/>
<dbReference type="STRING" id="9913.ENSBTAP00000052098"/>
<dbReference type="BindingDB" id="P23439"/>
<dbReference type="ChEMBL" id="CHEMBL2096979"/>
<dbReference type="DrugCentral" id="P23439"/>
<dbReference type="iPTMnet" id="P23439"/>
<dbReference type="PaxDb" id="9913-ENSBTAP00000052098"/>
<dbReference type="GeneID" id="281974"/>
<dbReference type="KEGG" id="bta:281974"/>
<dbReference type="CTD" id="5158"/>
<dbReference type="eggNOG" id="KOG3689">
    <property type="taxonomic scope" value="Eukaryota"/>
</dbReference>
<dbReference type="InParanoid" id="P23439"/>
<dbReference type="OrthoDB" id="546632at2759"/>
<dbReference type="PRO" id="PR:P23439"/>
<dbReference type="Proteomes" id="UP000009136">
    <property type="component" value="Unplaced"/>
</dbReference>
<dbReference type="GO" id="GO:0097381">
    <property type="term" value="C:photoreceptor disc membrane"/>
    <property type="evidence" value="ECO:0000304"/>
    <property type="project" value="Reactome"/>
</dbReference>
<dbReference type="GO" id="GO:0042622">
    <property type="term" value="C:photoreceptor outer segment membrane"/>
    <property type="evidence" value="ECO:0000314"/>
    <property type="project" value="CAFA"/>
</dbReference>
<dbReference type="GO" id="GO:0004115">
    <property type="term" value="F:3',5'-cyclic-AMP phosphodiesterase activity"/>
    <property type="evidence" value="ECO:0000318"/>
    <property type="project" value="GO_Central"/>
</dbReference>
<dbReference type="GO" id="GO:0047555">
    <property type="term" value="F:3',5'-cyclic-GMP phosphodiesterase activity"/>
    <property type="evidence" value="ECO:0000318"/>
    <property type="project" value="GO_Central"/>
</dbReference>
<dbReference type="GO" id="GO:0046872">
    <property type="term" value="F:metal ion binding"/>
    <property type="evidence" value="ECO:0007669"/>
    <property type="project" value="UniProtKB-KW"/>
</dbReference>
<dbReference type="GO" id="GO:0019933">
    <property type="term" value="P:cAMP-mediated signaling"/>
    <property type="evidence" value="ECO:0000318"/>
    <property type="project" value="GO_Central"/>
</dbReference>
<dbReference type="GO" id="GO:0043153">
    <property type="term" value="P:entrainment of circadian clock by photoperiod"/>
    <property type="evidence" value="ECO:0000250"/>
    <property type="project" value="UniProtKB"/>
</dbReference>
<dbReference type="GO" id="GO:0060041">
    <property type="term" value="P:retina development in camera-type eye"/>
    <property type="evidence" value="ECO:0000318"/>
    <property type="project" value="GO_Central"/>
</dbReference>
<dbReference type="GO" id="GO:0007601">
    <property type="term" value="P:visual perception"/>
    <property type="evidence" value="ECO:0007669"/>
    <property type="project" value="UniProtKB-KW"/>
</dbReference>
<dbReference type="CDD" id="cd00077">
    <property type="entry name" value="HDc"/>
    <property type="match status" value="1"/>
</dbReference>
<dbReference type="FunFam" id="1.10.1300.10:FF:000005">
    <property type="entry name" value="Phosphodiesterase"/>
    <property type="match status" value="1"/>
</dbReference>
<dbReference type="FunFam" id="3.30.450.40:FF:000001">
    <property type="entry name" value="Phosphodiesterase"/>
    <property type="match status" value="1"/>
</dbReference>
<dbReference type="FunFam" id="3.30.450.40:FF:000010">
    <property type="entry name" value="Phosphodiesterase"/>
    <property type="match status" value="1"/>
</dbReference>
<dbReference type="Gene3D" id="3.30.450.40">
    <property type="match status" value="2"/>
</dbReference>
<dbReference type="Gene3D" id="1.10.1300.10">
    <property type="entry name" value="3'5'-cyclic nucleotide phosphodiesterase, catalytic domain"/>
    <property type="match status" value="1"/>
</dbReference>
<dbReference type="InterPro" id="IPR003018">
    <property type="entry name" value="GAF"/>
</dbReference>
<dbReference type="InterPro" id="IPR029016">
    <property type="entry name" value="GAF-like_dom_sf"/>
</dbReference>
<dbReference type="InterPro" id="IPR003607">
    <property type="entry name" value="HD/PDEase_dom"/>
</dbReference>
<dbReference type="InterPro" id="IPR023088">
    <property type="entry name" value="PDEase"/>
</dbReference>
<dbReference type="InterPro" id="IPR002073">
    <property type="entry name" value="PDEase_catalytic_dom"/>
</dbReference>
<dbReference type="InterPro" id="IPR036971">
    <property type="entry name" value="PDEase_catalytic_dom_sf"/>
</dbReference>
<dbReference type="InterPro" id="IPR023174">
    <property type="entry name" value="PDEase_CS"/>
</dbReference>
<dbReference type="PANTHER" id="PTHR11347">
    <property type="entry name" value="CYCLIC NUCLEOTIDE PHOSPHODIESTERASE"/>
    <property type="match status" value="1"/>
</dbReference>
<dbReference type="Pfam" id="PF01590">
    <property type="entry name" value="GAF"/>
    <property type="match status" value="2"/>
</dbReference>
<dbReference type="Pfam" id="PF00233">
    <property type="entry name" value="PDEase_I"/>
    <property type="match status" value="1"/>
</dbReference>
<dbReference type="PRINTS" id="PR00387">
    <property type="entry name" value="PDIESTERASE1"/>
</dbReference>
<dbReference type="SMART" id="SM00065">
    <property type="entry name" value="GAF"/>
    <property type="match status" value="2"/>
</dbReference>
<dbReference type="SMART" id="SM00471">
    <property type="entry name" value="HDc"/>
    <property type="match status" value="1"/>
</dbReference>
<dbReference type="SUPFAM" id="SSF55781">
    <property type="entry name" value="GAF domain-like"/>
    <property type="match status" value="2"/>
</dbReference>
<dbReference type="SUPFAM" id="SSF109604">
    <property type="entry name" value="HD-domain/PDEase-like"/>
    <property type="match status" value="1"/>
</dbReference>
<dbReference type="PROSITE" id="PS00126">
    <property type="entry name" value="PDEASE_I_1"/>
    <property type="match status" value="1"/>
</dbReference>
<dbReference type="PROSITE" id="PS51845">
    <property type="entry name" value="PDEASE_I_2"/>
    <property type="match status" value="1"/>
</dbReference>
<protein>
    <recommendedName>
        <fullName>Rod cGMP-specific 3',5'-cyclic phosphodiesterase subunit beta</fullName>
        <shortName>GMP-PDE beta</shortName>
        <ecNumber>3.1.4.35</ecNumber>
    </recommendedName>
</protein>
<proteinExistence type="evidence at protein level"/>
<keyword id="KW-0002">3D-structure</keyword>
<keyword id="KW-0007">Acetylation</keyword>
<keyword id="KW-0966">Cell projection</keyword>
<keyword id="KW-0140">cGMP</keyword>
<keyword id="KW-0378">Hydrolase</keyword>
<keyword id="KW-0449">Lipoprotein</keyword>
<keyword id="KW-0472">Membrane</keyword>
<keyword id="KW-0479">Metal-binding</keyword>
<keyword id="KW-0488">Methylation</keyword>
<keyword id="KW-0636">Prenylation</keyword>
<keyword id="KW-1185">Reference proteome</keyword>
<keyword id="KW-0677">Repeat</keyword>
<keyword id="KW-0716">Sensory transduction</keyword>
<keyword id="KW-0844">Vision</keyword>
<evidence type="ECO:0000250" key="1"/>
<evidence type="ECO:0000250" key="2">
    <source>
        <dbReference type="UniProtKB" id="P23440"/>
    </source>
</evidence>
<evidence type="ECO:0000250" key="3">
    <source>
        <dbReference type="UniProtKB" id="P35913"/>
    </source>
</evidence>
<evidence type="ECO:0000255" key="4">
    <source>
        <dbReference type="PROSITE-ProRule" id="PRU01192"/>
    </source>
</evidence>
<evidence type="ECO:0000305" key="5"/>
<evidence type="ECO:0000305" key="6">
    <source>
    </source>
</evidence>
<evidence type="ECO:0007829" key="7">
    <source>
        <dbReference type="PDB" id="6MZB"/>
    </source>
</evidence>
<evidence type="ECO:0007829" key="8">
    <source>
        <dbReference type="PDB" id="7JSN"/>
    </source>
</evidence>
<evidence type="ECO:0007829" key="9">
    <source>
        <dbReference type="PDB" id="8UFI"/>
    </source>
</evidence>
<evidence type="ECO:0007829" key="10">
    <source>
        <dbReference type="PDB" id="8UGB"/>
    </source>
</evidence>
<evidence type="ECO:0007829" key="11">
    <source>
        <dbReference type="PDB" id="8UGS"/>
    </source>
</evidence>
<evidence type="ECO:0007829" key="12">
    <source>
        <dbReference type="PDB" id="8ULG"/>
    </source>
</evidence>
<reference key="1">
    <citation type="journal article" date="1990" name="J. Biol. Chem.">
        <title>Beta-subunit of bovine rod photoreceptor cGMP phosphodiesterase. Comparison with the phosphodiesterase family.</title>
        <authorList>
            <person name="Lipkin V.M."/>
            <person name="Khramtsov N.V."/>
            <person name="Vasilevskaya I.A."/>
            <person name="Atabekova N.V."/>
            <person name="Muradov K.G."/>
            <person name="Gubanov V.V."/>
            <person name="Li T."/>
            <person name="Johnston J.P."/>
            <person name="Volpp K.J."/>
            <person name="Applebury M.L."/>
        </authorList>
    </citation>
    <scope>NUCLEOTIDE SEQUENCE [MRNA]</scope>
    <scope>ACETYLATION AT SER-2</scope>
</reference>
<reference key="2">
    <citation type="journal article" date="1990" name="Bioorg. Khim.">
        <title>Cyclic GMP phosphodiesterase from bovine retina. Amino acid sequence of beta-subunit and nucleotide sequence of corresponding cDNA.</title>
        <authorList>
            <person name="Lipkin V.M."/>
            <person name="Gubanov V.V."/>
            <person name="Khramtsov N.V."/>
            <person name="Vasilevskaya I.A."/>
            <person name="Atabekova N.V."/>
            <person name="Muradov K.G."/>
            <person name="Shuvaeva T.M."/>
            <person name="Surina E.A."/>
            <person name="Zagranichny V.E."/>
            <person name="Li T."/>
        </authorList>
    </citation>
    <scope>NUCLEOTIDE SEQUENCE [MRNA]</scope>
</reference>
<sequence>MSLSEGQVHRFLDQNPGFADQYFGRKLSPEDVANACEDGCPEGCTSFRELCQVEESAALFELVQDMQENVNMERVVFKILRRLCSILHADRCSLFMYRQRNGVAELATRLFSVQPDSVLEDCLVPPDSEIVFPLDIGVVGHVAQTKKMVNVQDVMECPHFSSFADELTDYVTRNILATPIMNGKDVVAVIMAVNKLDGPCFTSEDEDVFLKYLNFGTLNLKIYHLSYLHNCETRRGQVLLWSANKVFEELTDIERQFHKAFYTVRAYLNCDRYSVGLLDMTKEKEFFDVWPVLMGEAQAYSGPRTPDGREILFYKVIDYILHGKEDIKVIPSPPADHWALASGLPTYVAESGFICNIMNAPADEMFNFQEGPLDDSGWIVKNVLSMPIVNKKEEIVGVATFYNRKDGKPFDEQDEVLMESLTQFLGWSVLNTDTYDKMNKLENRKDIAQDMVLYHVRCDREEIQLILPTRERLGKEPADCEEDELGKILKEVLPGPAKFDIYEFHFSDLECTELELVKCGIQMYYELGVVRKFQIPQEVLVRFLFSVSKGYRRITYHNWRHGFNVAQTMFTLLMTGKLKSYYTDLEAFAMVTAGLCHDIDHRGTNNLYQMKSQNPLAKLHGSSILERHHLEFGKFLLSEETLNIYQNLNRRQHEHVIHLMDIAIIATDLALYFKKRTMFQKIVDESKNYEDRKSWVEYLSLETTRKEIVMAMMMTACDLSAITKPWEVQSKVALLVAAEFWEQGDLERTVLDQQPIPMMDRNKAAELPKLQVGFIDFVCTFVYKEFSRFHEEILPMFDRLQNNRKEWKALADEYEAKVKALEEDQKKETTAKKVGTEICNGGPAPRSSTCRIL</sequence>
<organism>
    <name type="scientific">Bos taurus</name>
    <name type="common">Bovine</name>
    <dbReference type="NCBI Taxonomy" id="9913"/>
    <lineage>
        <taxon>Eukaryota</taxon>
        <taxon>Metazoa</taxon>
        <taxon>Chordata</taxon>
        <taxon>Craniata</taxon>
        <taxon>Vertebrata</taxon>
        <taxon>Euteleostomi</taxon>
        <taxon>Mammalia</taxon>
        <taxon>Eutheria</taxon>
        <taxon>Laurasiatheria</taxon>
        <taxon>Artiodactyla</taxon>
        <taxon>Ruminantia</taxon>
        <taxon>Pecora</taxon>
        <taxon>Bovidae</taxon>
        <taxon>Bovinae</taxon>
        <taxon>Bos</taxon>
    </lineage>
</organism>
<feature type="initiator methionine" description="Removed">
    <location>
        <position position="1"/>
    </location>
</feature>
<feature type="chain" id="PRO_0000023344" description="Rod cGMP-specific 3',5'-cyclic phosphodiesterase subunit beta">
    <location>
        <begin position="2"/>
        <end position="850"/>
    </location>
</feature>
<feature type="propeptide" id="PRO_0000023345" description="Removed in mature form" evidence="1">
    <location>
        <begin position="851"/>
        <end position="853"/>
    </location>
</feature>
<feature type="domain" description="GAF 1">
    <location>
        <begin position="71"/>
        <end position="220"/>
    </location>
</feature>
<feature type="domain" description="GAF 2">
    <location>
        <begin position="252"/>
        <end position="429"/>
    </location>
</feature>
<feature type="domain" description="PDEase" evidence="4">
    <location>
        <begin position="481"/>
        <end position="814"/>
    </location>
</feature>
<feature type="active site" description="Proton donor" evidence="1">
    <location>
        <position position="557"/>
    </location>
</feature>
<feature type="binding site" evidence="1">
    <location>
        <position position="561"/>
    </location>
    <ligand>
        <name>a divalent metal cation</name>
        <dbReference type="ChEBI" id="CHEBI:60240"/>
        <label>1</label>
    </ligand>
</feature>
<feature type="binding site" evidence="1">
    <location>
        <position position="597"/>
    </location>
    <ligand>
        <name>a divalent metal cation</name>
        <dbReference type="ChEBI" id="CHEBI:60240"/>
        <label>1</label>
    </ligand>
</feature>
<feature type="binding site" evidence="1">
    <location>
        <position position="598"/>
    </location>
    <ligand>
        <name>a divalent metal cation</name>
        <dbReference type="ChEBI" id="CHEBI:60240"/>
        <label>1</label>
    </ligand>
</feature>
<feature type="binding site" evidence="1">
    <location>
        <position position="598"/>
    </location>
    <ligand>
        <name>a divalent metal cation</name>
        <dbReference type="ChEBI" id="CHEBI:60240"/>
        <label>2</label>
    </ligand>
</feature>
<feature type="binding site" evidence="1">
    <location>
        <position position="718"/>
    </location>
    <ligand>
        <name>a divalent metal cation</name>
        <dbReference type="ChEBI" id="CHEBI:60240"/>
        <label>1</label>
    </ligand>
</feature>
<feature type="modified residue" description="N-acetylserine" evidence="6">
    <location>
        <position position="2"/>
    </location>
</feature>
<feature type="modified residue" description="Cysteine methyl ester" evidence="1">
    <location>
        <position position="850"/>
    </location>
</feature>
<feature type="lipid moiety-binding region" description="S-geranylgeranyl cysteine" evidence="1">
    <location>
        <position position="850"/>
    </location>
</feature>
<feature type="sequence conflict" description="In Ref. 2." evidence="5" ref="2">
    <original>DE</original>
    <variation>EQ</variation>
    <location>
        <begin position="483"/>
        <end position="484"/>
    </location>
</feature>
<feature type="helix" evidence="10">
    <location>
        <begin position="9"/>
        <end position="14"/>
    </location>
</feature>
<feature type="helix" evidence="10">
    <location>
        <begin position="16"/>
        <end position="24"/>
    </location>
</feature>
<feature type="helix" evidence="12">
    <location>
        <begin position="29"/>
        <end position="35"/>
    </location>
</feature>
<feature type="strand" evidence="12">
    <location>
        <begin position="36"/>
        <end position="38"/>
    </location>
</feature>
<feature type="strand" evidence="10">
    <location>
        <begin position="43"/>
        <end position="47"/>
    </location>
</feature>
<feature type="helix" evidence="10">
    <location>
        <begin position="48"/>
        <end position="66"/>
    </location>
</feature>
<feature type="strand" evidence="10">
    <location>
        <begin position="68"/>
        <end position="70"/>
    </location>
</feature>
<feature type="helix" evidence="10">
    <location>
        <begin position="72"/>
        <end position="83"/>
    </location>
</feature>
<feature type="turn" evidence="10">
    <location>
        <begin position="84"/>
        <end position="86"/>
    </location>
</feature>
<feature type="strand" evidence="10">
    <location>
        <begin position="90"/>
        <end position="100"/>
    </location>
</feature>
<feature type="strand" evidence="10">
    <location>
        <begin position="103"/>
        <end position="110"/>
    </location>
</feature>
<feature type="helix" evidence="10">
    <location>
        <begin position="119"/>
        <end position="122"/>
    </location>
</feature>
<feature type="helix" evidence="10">
    <location>
        <begin position="126"/>
        <end position="128"/>
    </location>
</feature>
<feature type="strand" evidence="10">
    <location>
        <begin position="131"/>
        <end position="133"/>
    </location>
</feature>
<feature type="helix" evidence="10">
    <location>
        <begin position="137"/>
        <end position="145"/>
    </location>
</feature>
<feature type="strand" evidence="10">
    <location>
        <begin position="149"/>
        <end position="152"/>
    </location>
</feature>
<feature type="turn" evidence="10">
    <location>
        <begin position="154"/>
        <end position="156"/>
    </location>
</feature>
<feature type="helix" evidence="10">
    <location>
        <begin position="163"/>
        <end position="168"/>
    </location>
</feature>
<feature type="strand" evidence="10">
    <location>
        <begin position="175"/>
        <end position="182"/>
    </location>
</feature>
<feature type="strand" evidence="10">
    <location>
        <begin position="185"/>
        <end position="193"/>
    </location>
</feature>
<feature type="strand" evidence="10">
    <location>
        <begin position="197"/>
        <end position="200"/>
    </location>
</feature>
<feature type="helix" evidence="10">
    <location>
        <begin position="203"/>
        <end position="246"/>
    </location>
</feature>
<feature type="helix" evidence="10">
    <location>
        <begin position="253"/>
        <end position="263"/>
    </location>
</feature>
<feature type="helix" evidence="10">
    <location>
        <begin position="265"/>
        <end position="268"/>
    </location>
</feature>
<feature type="strand" evidence="10">
    <location>
        <begin position="270"/>
        <end position="278"/>
    </location>
</feature>
<feature type="helix" evidence="10">
    <location>
        <begin position="286"/>
        <end position="293"/>
    </location>
</feature>
<feature type="strand" evidence="11">
    <location>
        <begin position="295"/>
        <end position="297"/>
    </location>
</feature>
<feature type="strand" evidence="10">
    <location>
        <begin position="313"/>
        <end position="320"/>
    </location>
</feature>
<feature type="strand" evidence="10">
    <location>
        <begin position="322"/>
        <end position="324"/>
    </location>
</feature>
<feature type="strand" evidence="10">
    <location>
        <begin position="326"/>
        <end position="332"/>
    </location>
</feature>
<feature type="helix" evidence="10">
    <location>
        <begin position="338"/>
        <end position="341"/>
    </location>
</feature>
<feature type="helix" evidence="10">
    <location>
        <begin position="344"/>
        <end position="351"/>
    </location>
</feature>
<feature type="strand" evidence="10">
    <location>
        <begin position="354"/>
        <end position="359"/>
    </location>
</feature>
<feature type="helix" evidence="10">
    <location>
        <begin position="360"/>
        <end position="362"/>
    </location>
</feature>
<feature type="strand" evidence="10">
    <location>
        <begin position="364"/>
        <end position="366"/>
    </location>
</feature>
<feature type="turn" evidence="10">
    <location>
        <begin position="374"/>
        <end position="377"/>
    </location>
</feature>
<feature type="strand" evidence="10">
    <location>
        <begin position="382"/>
        <end position="389"/>
    </location>
</feature>
<feature type="strand" evidence="8">
    <location>
        <begin position="391"/>
        <end position="393"/>
    </location>
</feature>
<feature type="strand" evidence="10">
    <location>
        <begin position="395"/>
        <end position="401"/>
    </location>
</feature>
<feature type="strand" evidence="8">
    <location>
        <begin position="404"/>
        <end position="407"/>
    </location>
</feature>
<feature type="helix" evidence="10">
    <location>
        <begin position="412"/>
        <end position="427"/>
    </location>
</feature>
<feature type="helix" evidence="10">
    <location>
        <begin position="430"/>
        <end position="456"/>
    </location>
</feature>
<feature type="helix" evidence="10">
    <location>
        <begin position="462"/>
        <end position="465"/>
    </location>
</feature>
<feature type="helix" evidence="10">
    <location>
        <begin position="469"/>
        <end position="472"/>
    </location>
</feature>
<feature type="strand" evidence="12">
    <location>
        <begin position="473"/>
        <end position="475"/>
    </location>
</feature>
<feature type="helix" evidence="10">
    <location>
        <begin position="477"/>
        <end position="479"/>
    </location>
</feature>
<feature type="helix" evidence="10">
    <location>
        <begin position="482"/>
        <end position="492"/>
    </location>
</feature>
<feature type="turn" evidence="10">
    <location>
        <begin position="496"/>
        <end position="502"/>
    </location>
</feature>
<feature type="helix" evidence="10">
    <location>
        <begin position="513"/>
        <end position="527"/>
    </location>
</feature>
<feature type="helix" evidence="10">
    <location>
        <begin position="529"/>
        <end position="533"/>
    </location>
</feature>
<feature type="helix" evidence="10">
    <location>
        <begin position="537"/>
        <end position="550"/>
    </location>
</feature>
<feature type="strand" evidence="10">
    <location>
        <begin position="555"/>
        <end position="558"/>
    </location>
</feature>
<feature type="helix" evidence="10">
    <location>
        <begin position="559"/>
        <end position="574"/>
    </location>
</feature>
<feature type="helix" evidence="10">
    <location>
        <begin position="578"/>
        <end position="581"/>
    </location>
</feature>
<feature type="helix" evidence="10">
    <location>
        <begin position="584"/>
        <end position="595"/>
    </location>
</feature>
<feature type="strand" evidence="10">
    <location>
        <begin position="597"/>
        <end position="600"/>
    </location>
</feature>
<feature type="helix" evidence="10">
    <location>
        <begin position="606"/>
        <end position="612"/>
    </location>
</feature>
<feature type="helix" evidence="10">
    <location>
        <begin position="615"/>
        <end position="619"/>
    </location>
</feature>
<feature type="strand" evidence="10">
    <location>
        <begin position="621"/>
        <end position="623"/>
    </location>
</feature>
<feature type="turn" evidence="10">
    <location>
        <begin position="624"/>
        <end position="626"/>
    </location>
</feature>
<feature type="helix" evidence="10">
    <location>
        <begin position="627"/>
        <end position="638"/>
    </location>
</feature>
<feature type="helix" evidence="10">
    <location>
        <begin position="640"/>
        <end position="642"/>
    </location>
</feature>
<feature type="turn" evidence="10">
    <location>
        <begin position="644"/>
        <end position="647"/>
    </location>
</feature>
<feature type="helix" evidence="10">
    <location>
        <begin position="650"/>
        <end position="665"/>
    </location>
</feature>
<feature type="helix" evidence="10">
    <location>
        <begin position="669"/>
        <end position="674"/>
    </location>
</feature>
<feature type="helix" evidence="10">
    <location>
        <begin position="676"/>
        <end position="687"/>
    </location>
</feature>
<feature type="strand" evidence="9">
    <location>
        <begin position="689"/>
        <end position="691"/>
    </location>
</feature>
<feature type="helix" evidence="10">
    <location>
        <begin position="692"/>
        <end position="699"/>
    </location>
</feature>
<feature type="helix" evidence="10">
    <location>
        <begin position="703"/>
        <end position="718"/>
    </location>
</feature>
<feature type="turn" evidence="10">
    <location>
        <begin position="719"/>
        <end position="723"/>
    </location>
</feature>
<feature type="helix" evidence="10">
    <location>
        <begin position="726"/>
        <end position="749"/>
    </location>
</feature>
<feature type="helix" evidence="10">
    <location>
        <begin position="757"/>
        <end position="759"/>
    </location>
</feature>
<feature type="helix" evidence="7">
    <location>
        <begin position="761"/>
        <end position="763"/>
    </location>
</feature>
<feature type="helix" evidence="10">
    <location>
        <begin position="764"/>
        <end position="766"/>
    </location>
</feature>
<feature type="helix" evidence="10">
    <location>
        <begin position="767"/>
        <end position="777"/>
    </location>
</feature>
<feature type="helix" evidence="10">
    <location>
        <begin position="779"/>
        <end position="789"/>
    </location>
</feature>
<feature type="helix" evidence="9">
    <location>
        <begin position="791"/>
        <end position="793"/>
    </location>
</feature>
<feature type="helix" evidence="10">
    <location>
        <begin position="794"/>
        <end position="816"/>
    </location>
</feature>
<feature type="turn" evidence="12">
    <location>
        <begin position="823"/>
        <end position="825"/>
    </location>
</feature>